<accession>A4FS04</accession>
<proteinExistence type="evidence at protein level"/>
<evidence type="ECO:0000250" key="1"/>
<evidence type="ECO:0000255" key="2">
    <source>
        <dbReference type="PROSITE-ProRule" id="PRU10035"/>
    </source>
</evidence>
<evidence type="ECO:0000255" key="3">
    <source>
        <dbReference type="PROSITE-ProRule" id="PRU10036"/>
    </source>
</evidence>
<evidence type="ECO:0000269" key="4">
    <source>
    </source>
</evidence>
<evidence type="ECO:0000305" key="5"/>
<evidence type="ECO:0007829" key="6">
    <source>
        <dbReference type="PDB" id="2OSH"/>
    </source>
</evidence>
<name>PA2A_NAJAT</name>
<dbReference type="EC" id="3.1.1.4"/>
<dbReference type="EMBL" id="AM492700">
    <property type="protein sequence ID" value="CAM34525.2"/>
    <property type="status" value="ALT_INIT"/>
    <property type="molecule type" value="mRNA"/>
</dbReference>
<dbReference type="PDB" id="2OSH">
    <property type="method" value="X-ray"/>
    <property type="resolution" value="2.20 A"/>
    <property type="chains" value="A=1-119"/>
</dbReference>
<dbReference type="PDBsum" id="2OSH"/>
<dbReference type="SMR" id="A4FS04"/>
<dbReference type="EvolutionaryTrace" id="A4FS04"/>
<dbReference type="GO" id="GO:0005576">
    <property type="term" value="C:extracellular region"/>
    <property type="evidence" value="ECO:0007669"/>
    <property type="project" value="UniProtKB-SubCell"/>
</dbReference>
<dbReference type="GO" id="GO:0005509">
    <property type="term" value="F:calcium ion binding"/>
    <property type="evidence" value="ECO:0007669"/>
    <property type="project" value="InterPro"/>
</dbReference>
<dbReference type="GO" id="GO:0047498">
    <property type="term" value="F:calcium-dependent phospholipase A2 activity"/>
    <property type="evidence" value="ECO:0007669"/>
    <property type="project" value="TreeGrafter"/>
</dbReference>
<dbReference type="GO" id="GO:0005543">
    <property type="term" value="F:phospholipid binding"/>
    <property type="evidence" value="ECO:0007669"/>
    <property type="project" value="TreeGrafter"/>
</dbReference>
<dbReference type="GO" id="GO:0015459">
    <property type="term" value="F:potassium channel regulator activity"/>
    <property type="evidence" value="ECO:0007669"/>
    <property type="project" value="UniProtKB-KW"/>
</dbReference>
<dbReference type="GO" id="GO:0090729">
    <property type="term" value="F:toxin activity"/>
    <property type="evidence" value="ECO:0007669"/>
    <property type="project" value="UniProtKB-KW"/>
</dbReference>
<dbReference type="GO" id="GO:0050482">
    <property type="term" value="P:arachidonate secretion"/>
    <property type="evidence" value="ECO:0007669"/>
    <property type="project" value="InterPro"/>
</dbReference>
<dbReference type="GO" id="GO:0016042">
    <property type="term" value="P:lipid catabolic process"/>
    <property type="evidence" value="ECO:0007669"/>
    <property type="project" value="UniProtKB-KW"/>
</dbReference>
<dbReference type="GO" id="GO:0006644">
    <property type="term" value="P:phospholipid metabolic process"/>
    <property type="evidence" value="ECO:0007669"/>
    <property type="project" value="InterPro"/>
</dbReference>
<dbReference type="CDD" id="cd00125">
    <property type="entry name" value="PLA2c"/>
    <property type="match status" value="1"/>
</dbReference>
<dbReference type="FunFam" id="1.20.90.10:FF:000007">
    <property type="entry name" value="Acidic phospholipase A2"/>
    <property type="match status" value="1"/>
</dbReference>
<dbReference type="Gene3D" id="1.20.90.10">
    <property type="entry name" value="Phospholipase A2 domain"/>
    <property type="match status" value="1"/>
</dbReference>
<dbReference type="InterPro" id="IPR001211">
    <property type="entry name" value="PLipase_A2"/>
</dbReference>
<dbReference type="InterPro" id="IPR033112">
    <property type="entry name" value="PLipase_A2_Asp_AS"/>
</dbReference>
<dbReference type="InterPro" id="IPR016090">
    <property type="entry name" value="PLipase_A2_dom"/>
</dbReference>
<dbReference type="InterPro" id="IPR036444">
    <property type="entry name" value="PLipase_A2_dom_sf"/>
</dbReference>
<dbReference type="InterPro" id="IPR033113">
    <property type="entry name" value="PLipase_A2_His_AS"/>
</dbReference>
<dbReference type="PANTHER" id="PTHR11716:SF94">
    <property type="entry name" value="PHOSPHOLIPASE A2"/>
    <property type="match status" value="1"/>
</dbReference>
<dbReference type="PANTHER" id="PTHR11716">
    <property type="entry name" value="PHOSPHOLIPASE A2 FAMILY MEMBER"/>
    <property type="match status" value="1"/>
</dbReference>
<dbReference type="Pfam" id="PF00068">
    <property type="entry name" value="Phospholip_A2_1"/>
    <property type="match status" value="1"/>
</dbReference>
<dbReference type="PRINTS" id="PR00389">
    <property type="entry name" value="PHPHLIPASEA2"/>
</dbReference>
<dbReference type="SMART" id="SM00085">
    <property type="entry name" value="PA2c"/>
    <property type="match status" value="1"/>
</dbReference>
<dbReference type="SUPFAM" id="SSF48619">
    <property type="entry name" value="Phospholipase A2, PLA2"/>
    <property type="match status" value="1"/>
</dbReference>
<dbReference type="PROSITE" id="PS00119">
    <property type="entry name" value="PA2_ASP"/>
    <property type="match status" value="1"/>
</dbReference>
<dbReference type="PROSITE" id="PS00118">
    <property type="entry name" value="PA2_HIS"/>
    <property type="match status" value="1"/>
</dbReference>
<sequence>NLYQFKNMIQCTVPSRSWWDFADYGCYCGKGGSGTPVDDLDRCCQVHDNCYNEAEKISGCWPYFKTYSYECSQGTLTCKGGNNACAAAVCDCDRLAAICFAGAPYTDANYNIDLKARCQ</sequence>
<organism>
    <name type="scientific">Naja atra</name>
    <name type="common">Chinese cobra</name>
    <dbReference type="NCBI Taxonomy" id="8656"/>
    <lineage>
        <taxon>Eukaryota</taxon>
        <taxon>Metazoa</taxon>
        <taxon>Chordata</taxon>
        <taxon>Craniata</taxon>
        <taxon>Vertebrata</taxon>
        <taxon>Euteleostomi</taxon>
        <taxon>Lepidosauria</taxon>
        <taxon>Squamata</taxon>
        <taxon>Bifurcata</taxon>
        <taxon>Unidentata</taxon>
        <taxon>Episquamata</taxon>
        <taxon>Toxicofera</taxon>
        <taxon>Serpentes</taxon>
        <taxon>Colubroidea</taxon>
        <taxon>Elapidae</taxon>
        <taxon>Elapinae</taxon>
        <taxon>Naja</taxon>
    </lineage>
</organism>
<reference key="1">
    <citation type="journal article" date="2008" name="Proteins">
        <title>Crystal structure of Natratoxin, a novel snake secreted phospholipase A2 neurotoxin from Naja atra venom inhibiting A-type K(+) currents.</title>
        <authorList>
            <person name="Hu P."/>
            <person name="Sun L."/>
            <person name="Zhu Z.-Q."/>
            <person name="Hou X.-W."/>
            <person name="Wang S."/>
            <person name="Yu S.-S."/>
            <person name="Wang H.-L."/>
            <person name="Zhang P."/>
            <person name="Wang M."/>
            <person name="Niu L.-W."/>
            <person name="Teng M.-K."/>
            <person name="Ruan D.-Y."/>
        </authorList>
    </citation>
    <scope>NUCLEOTIDE SEQUENCE [MRNA]</scope>
    <scope>PROTEIN SEQUENCE</scope>
    <scope>FUNCTION</scope>
    <scope>CATALYTIC ACTIVITY</scope>
    <scope>X-RAY CRYSTALLOGRAPHY (2.2 ANGSTROMS)</scope>
    <scope>DISULFIDE BONDS</scope>
    <source>
        <tissue>Venom</tissue>
        <tissue>Venom gland</tissue>
    </source>
</reference>
<feature type="chain" id="PRO_0000352492" description="Acidic phospholipase A2 natratoxin">
    <location>
        <begin position="1"/>
        <end position="119"/>
    </location>
</feature>
<feature type="active site" evidence="1">
    <location>
        <position position="47"/>
    </location>
</feature>
<feature type="active site" evidence="1">
    <location>
        <position position="93"/>
    </location>
</feature>
<feature type="binding site" evidence="1">
    <location>
        <position position="27"/>
    </location>
    <ligand>
        <name>Ca(2+)</name>
        <dbReference type="ChEBI" id="CHEBI:29108"/>
    </ligand>
</feature>
<feature type="binding site" evidence="1">
    <location>
        <position position="29"/>
    </location>
    <ligand>
        <name>Ca(2+)</name>
        <dbReference type="ChEBI" id="CHEBI:29108"/>
    </ligand>
</feature>
<feature type="binding site" evidence="1">
    <location>
        <position position="31"/>
    </location>
    <ligand>
        <name>Ca(2+)</name>
        <dbReference type="ChEBI" id="CHEBI:29108"/>
    </ligand>
</feature>
<feature type="binding site" evidence="1">
    <location>
        <position position="48"/>
    </location>
    <ligand>
        <name>Ca(2+)</name>
        <dbReference type="ChEBI" id="CHEBI:29108"/>
    </ligand>
</feature>
<feature type="disulfide bond" evidence="4">
    <location>
        <begin position="11"/>
        <end position="71"/>
    </location>
</feature>
<feature type="disulfide bond" evidence="4">
    <location>
        <begin position="26"/>
        <end position="118"/>
    </location>
</feature>
<feature type="disulfide bond" evidence="4">
    <location>
        <begin position="28"/>
        <end position="44"/>
    </location>
</feature>
<feature type="disulfide bond" evidence="4">
    <location>
        <begin position="43"/>
        <end position="99"/>
    </location>
</feature>
<feature type="disulfide bond" evidence="4">
    <location>
        <begin position="50"/>
        <end position="92"/>
    </location>
</feature>
<feature type="disulfide bond" evidence="4">
    <location>
        <begin position="60"/>
        <end position="85"/>
    </location>
</feature>
<feature type="disulfide bond" evidence="4">
    <location>
        <begin position="78"/>
        <end position="90"/>
    </location>
</feature>
<feature type="sequence conflict" description="In Ref. 1; AA sequence." evidence="5" ref="1">
    <original>W</original>
    <variation>C</variation>
    <location>
        <position position="19"/>
    </location>
</feature>
<feature type="helix" evidence="6">
    <location>
        <begin position="2"/>
        <end position="12"/>
    </location>
</feature>
<feature type="helix" evidence="6">
    <location>
        <begin position="18"/>
        <end position="21"/>
    </location>
</feature>
<feature type="strand" evidence="6">
    <location>
        <begin position="22"/>
        <end position="24"/>
    </location>
</feature>
<feature type="turn" evidence="6">
    <location>
        <begin position="25"/>
        <end position="27"/>
    </location>
</feature>
<feature type="helix" evidence="6">
    <location>
        <begin position="39"/>
        <end position="54"/>
    </location>
</feature>
<feature type="turn" evidence="6">
    <location>
        <begin position="62"/>
        <end position="64"/>
    </location>
</feature>
<feature type="strand" evidence="6">
    <location>
        <begin position="69"/>
        <end position="72"/>
    </location>
</feature>
<feature type="strand" evidence="6">
    <location>
        <begin position="75"/>
        <end position="78"/>
    </location>
</feature>
<feature type="helix" evidence="6">
    <location>
        <begin position="84"/>
        <end position="102"/>
    </location>
</feature>
<feature type="helix" evidence="6">
    <location>
        <begin position="107"/>
        <end position="109"/>
    </location>
</feature>
<feature type="helix" evidence="6">
    <location>
        <begin position="114"/>
        <end position="117"/>
    </location>
</feature>
<comment type="function">
    <text evidence="4">Snake venom phospholipase A2 (PLA2) that has an effectively inhibitory effect on A-type K(+) currents (Kv/KCN) in acutely dissociated rat dorsal root ganglion (DRG) neurons. This inhibitory effect is independent of its enzymatic activity. PLA2 catalyzes the calcium-dependent hydrolysis of the 2-acyl groups in 3-sn-phosphoglycerides.</text>
</comment>
<comment type="catalytic activity">
    <reaction evidence="2 3 4">
        <text>a 1,2-diacyl-sn-glycero-3-phosphocholine + H2O = a 1-acyl-sn-glycero-3-phosphocholine + a fatty acid + H(+)</text>
        <dbReference type="Rhea" id="RHEA:15801"/>
        <dbReference type="ChEBI" id="CHEBI:15377"/>
        <dbReference type="ChEBI" id="CHEBI:15378"/>
        <dbReference type="ChEBI" id="CHEBI:28868"/>
        <dbReference type="ChEBI" id="CHEBI:57643"/>
        <dbReference type="ChEBI" id="CHEBI:58168"/>
        <dbReference type="EC" id="3.1.1.4"/>
    </reaction>
</comment>
<comment type="cofactor">
    <cofactor evidence="1">
        <name>Ca(2+)</name>
        <dbReference type="ChEBI" id="CHEBI:29108"/>
    </cofactor>
    <text evidence="1">Binds 1 Ca(2+) ion.</text>
</comment>
<comment type="subcellular location">
    <subcellularLocation>
        <location>Secreted</location>
    </subcellularLocation>
</comment>
<comment type="tissue specificity">
    <text>Expressed by the venom gland.</text>
</comment>
<comment type="similarity">
    <text evidence="5">Belongs to the phospholipase A2 family. Group I subfamily. D49 sub-subfamily.</text>
</comment>
<comment type="sequence caution" evidence="5">
    <conflict type="erroneous initiation">
        <sequence resource="EMBL-CDS" id="CAM34525"/>
    </conflict>
</comment>
<protein>
    <recommendedName>
        <fullName>Acidic phospholipase A2 natratoxin</fullName>
        <shortName>svPLA2</shortName>
        <ecNumber>3.1.1.4</ecNumber>
    </recommendedName>
    <alternativeName>
        <fullName>Phosphatidylcholine 2-acylhydrolase</fullName>
    </alternativeName>
</protein>
<keyword id="KW-0002">3D-structure</keyword>
<keyword id="KW-0106">Calcium</keyword>
<keyword id="KW-0903">Direct protein sequencing</keyword>
<keyword id="KW-1015">Disulfide bond</keyword>
<keyword id="KW-0378">Hydrolase</keyword>
<keyword id="KW-0872">Ion channel impairing toxin</keyword>
<keyword id="KW-0442">Lipid degradation</keyword>
<keyword id="KW-0443">Lipid metabolism</keyword>
<keyword id="KW-0479">Metal-binding</keyword>
<keyword id="KW-0528">Neurotoxin</keyword>
<keyword id="KW-0632">Potassium channel impairing toxin</keyword>
<keyword id="KW-0964">Secreted</keyword>
<keyword id="KW-0800">Toxin</keyword>
<keyword id="KW-1220">Voltage-gated potassium channel impairing toxin</keyword>